<evidence type="ECO:0000255" key="1">
    <source>
        <dbReference type="HAMAP-Rule" id="MF_00600"/>
    </source>
</evidence>
<gene>
    <name evidence="1" type="primary">groEL1</name>
    <name evidence="1" type="synonym">groL1</name>
    <name type="ordered locus">CYA_0332</name>
</gene>
<protein>
    <recommendedName>
        <fullName evidence="1">Chaperonin GroEL 1</fullName>
        <ecNumber evidence="1">5.6.1.7</ecNumber>
    </recommendedName>
    <alternativeName>
        <fullName evidence="1">60 kDa chaperonin 1</fullName>
    </alternativeName>
    <alternativeName>
        <fullName evidence="1">Chaperonin-60 1</fullName>
        <shortName evidence="1">Cpn60 1</shortName>
    </alternativeName>
</protein>
<accession>Q2JXD4</accession>
<proteinExistence type="inferred from homology"/>
<name>CH601_SYNJA</name>
<reference key="1">
    <citation type="journal article" date="2007" name="ISME J.">
        <title>Population level functional diversity in a microbial community revealed by comparative genomic and metagenomic analyses.</title>
        <authorList>
            <person name="Bhaya D."/>
            <person name="Grossman A.R."/>
            <person name="Steunou A.-S."/>
            <person name="Khuri N."/>
            <person name="Cohan F.M."/>
            <person name="Hamamura N."/>
            <person name="Melendrez M.C."/>
            <person name="Bateson M.M."/>
            <person name="Ward D.M."/>
            <person name="Heidelberg J.F."/>
        </authorList>
    </citation>
    <scope>NUCLEOTIDE SEQUENCE [LARGE SCALE GENOMIC DNA]</scope>
    <source>
        <strain>JA-3-3Ab</strain>
    </source>
</reference>
<comment type="function">
    <text evidence="1">Together with its co-chaperonin GroES, plays an essential role in assisting protein folding. The GroEL-GroES system forms a nano-cage that allows encapsulation of the non-native substrate proteins and provides a physical environment optimized to promote and accelerate protein folding.</text>
</comment>
<comment type="catalytic activity">
    <reaction evidence="1">
        <text>ATP + H2O + a folded polypeptide = ADP + phosphate + an unfolded polypeptide.</text>
        <dbReference type="EC" id="5.6.1.7"/>
    </reaction>
</comment>
<comment type="subunit">
    <text evidence="1">Forms a cylinder of 14 subunits composed of two heptameric rings stacked back-to-back. Interacts with the co-chaperonin GroES.</text>
</comment>
<comment type="subcellular location">
    <subcellularLocation>
        <location evidence="1">Cytoplasm</location>
    </subcellularLocation>
</comment>
<comment type="similarity">
    <text evidence="1">Belongs to the chaperonin (HSP60) family.</text>
</comment>
<feature type="chain" id="PRO_0000257008" description="Chaperonin GroEL 1">
    <location>
        <begin position="1"/>
        <end position="542"/>
    </location>
</feature>
<feature type="binding site" evidence="1">
    <location>
        <begin position="29"/>
        <end position="32"/>
    </location>
    <ligand>
        <name>ATP</name>
        <dbReference type="ChEBI" id="CHEBI:30616"/>
    </ligand>
</feature>
<feature type="binding site" evidence="1">
    <location>
        <begin position="86"/>
        <end position="90"/>
    </location>
    <ligand>
        <name>ATP</name>
        <dbReference type="ChEBI" id="CHEBI:30616"/>
    </ligand>
</feature>
<feature type="binding site" evidence="1">
    <location>
        <position position="414"/>
    </location>
    <ligand>
        <name>ATP</name>
        <dbReference type="ChEBI" id="CHEBI:30616"/>
    </ligand>
</feature>
<feature type="binding site" evidence="1">
    <location>
        <begin position="479"/>
        <end position="481"/>
    </location>
    <ligand>
        <name>ATP</name>
        <dbReference type="ChEBI" id="CHEBI:30616"/>
    </ligand>
</feature>
<feature type="binding site" evidence="1">
    <location>
        <position position="495"/>
    </location>
    <ligand>
        <name>ATP</name>
        <dbReference type="ChEBI" id="CHEBI:30616"/>
    </ligand>
</feature>
<dbReference type="EC" id="5.6.1.7" evidence="1"/>
<dbReference type="EMBL" id="CP000239">
    <property type="protein sequence ID" value="ABC98552.1"/>
    <property type="molecule type" value="Genomic_DNA"/>
</dbReference>
<dbReference type="SMR" id="Q2JXD4"/>
<dbReference type="STRING" id="321327.CYA_0332"/>
<dbReference type="KEGG" id="cya:CYA_0332"/>
<dbReference type="eggNOG" id="COG0459">
    <property type="taxonomic scope" value="Bacteria"/>
</dbReference>
<dbReference type="HOGENOM" id="CLU_016503_6_1_3"/>
<dbReference type="OrthoDB" id="9766614at2"/>
<dbReference type="Proteomes" id="UP000008818">
    <property type="component" value="Chromosome"/>
</dbReference>
<dbReference type="GO" id="GO:0005737">
    <property type="term" value="C:cytoplasm"/>
    <property type="evidence" value="ECO:0007669"/>
    <property type="project" value="UniProtKB-SubCell"/>
</dbReference>
<dbReference type="GO" id="GO:0005524">
    <property type="term" value="F:ATP binding"/>
    <property type="evidence" value="ECO:0007669"/>
    <property type="project" value="UniProtKB-UniRule"/>
</dbReference>
<dbReference type="GO" id="GO:0140662">
    <property type="term" value="F:ATP-dependent protein folding chaperone"/>
    <property type="evidence" value="ECO:0007669"/>
    <property type="project" value="InterPro"/>
</dbReference>
<dbReference type="GO" id="GO:0016853">
    <property type="term" value="F:isomerase activity"/>
    <property type="evidence" value="ECO:0007669"/>
    <property type="project" value="UniProtKB-KW"/>
</dbReference>
<dbReference type="GO" id="GO:0051082">
    <property type="term" value="F:unfolded protein binding"/>
    <property type="evidence" value="ECO:0007669"/>
    <property type="project" value="UniProtKB-UniRule"/>
</dbReference>
<dbReference type="GO" id="GO:0042026">
    <property type="term" value="P:protein refolding"/>
    <property type="evidence" value="ECO:0007669"/>
    <property type="project" value="UniProtKB-UniRule"/>
</dbReference>
<dbReference type="CDD" id="cd03344">
    <property type="entry name" value="GroEL"/>
    <property type="match status" value="1"/>
</dbReference>
<dbReference type="FunFam" id="3.50.7.10:FF:000001">
    <property type="entry name" value="60 kDa chaperonin"/>
    <property type="match status" value="1"/>
</dbReference>
<dbReference type="Gene3D" id="3.50.7.10">
    <property type="entry name" value="GroEL"/>
    <property type="match status" value="1"/>
</dbReference>
<dbReference type="Gene3D" id="1.10.560.10">
    <property type="entry name" value="GroEL-like equatorial domain"/>
    <property type="match status" value="1"/>
</dbReference>
<dbReference type="Gene3D" id="3.30.260.10">
    <property type="entry name" value="TCP-1-like chaperonin intermediate domain"/>
    <property type="match status" value="1"/>
</dbReference>
<dbReference type="HAMAP" id="MF_00600">
    <property type="entry name" value="CH60"/>
    <property type="match status" value="1"/>
</dbReference>
<dbReference type="InterPro" id="IPR018370">
    <property type="entry name" value="Chaperonin_Cpn60_CS"/>
</dbReference>
<dbReference type="InterPro" id="IPR001844">
    <property type="entry name" value="Cpn60/GroEL"/>
</dbReference>
<dbReference type="InterPro" id="IPR002423">
    <property type="entry name" value="Cpn60/GroEL/TCP-1"/>
</dbReference>
<dbReference type="InterPro" id="IPR027409">
    <property type="entry name" value="GroEL-like_apical_dom_sf"/>
</dbReference>
<dbReference type="InterPro" id="IPR027413">
    <property type="entry name" value="GROEL-like_equatorial_sf"/>
</dbReference>
<dbReference type="InterPro" id="IPR027410">
    <property type="entry name" value="TCP-1-like_intermed_sf"/>
</dbReference>
<dbReference type="NCBIfam" id="TIGR02348">
    <property type="entry name" value="GroEL"/>
    <property type="match status" value="1"/>
</dbReference>
<dbReference type="NCBIfam" id="NF000592">
    <property type="entry name" value="PRK00013.1"/>
    <property type="match status" value="1"/>
</dbReference>
<dbReference type="NCBIfam" id="NF009487">
    <property type="entry name" value="PRK12849.1"/>
    <property type="match status" value="1"/>
</dbReference>
<dbReference type="NCBIfam" id="NF009488">
    <property type="entry name" value="PRK12850.1"/>
    <property type="match status" value="1"/>
</dbReference>
<dbReference type="NCBIfam" id="NF009489">
    <property type="entry name" value="PRK12851.1"/>
    <property type="match status" value="1"/>
</dbReference>
<dbReference type="PANTHER" id="PTHR45633">
    <property type="entry name" value="60 KDA HEAT SHOCK PROTEIN, MITOCHONDRIAL"/>
    <property type="match status" value="1"/>
</dbReference>
<dbReference type="Pfam" id="PF00118">
    <property type="entry name" value="Cpn60_TCP1"/>
    <property type="match status" value="1"/>
</dbReference>
<dbReference type="PRINTS" id="PR00298">
    <property type="entry name" value="CHAPERONIN60"/>
</dbReference>
<dbReference type="SUPFAM" id="SSF52029">
    <property type="entry name" value="GroEL apical domain-like"/>
    <property type="match status" value="1"/>
</dbReference>
<dbReference type="SUPFAM" id="SSF48592">
    <property type="entry name" value="GroEL equatorial domain-like"/>
    <property type="match status" value="2"/>
</dbReference>
<dbReference type="PROSITE" id="PS00296">
    <property type="entry name" value="CHAPERONINS_CPN60"/>
    <property type="match status" value="1"/>
</dbReference>
<organism>
    <name type="scientific">Synechococcus sp. (strain JA-3-3Ab)</name>
    <name type="common">Cyanobacteria bacterium Yellowstone A-Prime</name>
    <dbReference type="NCBI Taxonomy" id="321327"/>
    <lineage>
        <taxon>Bacteria</taxon>
        <taxon>Bacillati</taxon>
        <taxon>Cyanobacteriota</taxon>
        <taxon>Cyanophyceae</taxon>
        <taxon>Synechococcales</taxon>
        <taxon>Synechococcaceae</taxon>
        <taxon>Synechococcus</taxon>
    </lineage>
</organism>
<keyword id="KW-0067">ATP-binding</keyword>
<keyword id="KW-0143">Chaperone</keyword>
<keyword id="KW-0963">Cytoplasm</keyword>
<keyword id="KW-0413">Isomerase</keyword>
<keyword id="KW-0547">Nucleotide-binding</keyword>
<sequence>MAKQILFREEARKALEQGINQLADAVKVTIGPKGRNVLLEKKFGAPQIVNDGVTIAKEIELADPLENTGAQLMREVATKTNDVAGDGTTTATILAQSMVQEGLKNISAGANPVALRRGIEKTTAYLVEQIAAQAKPVEGRKNIAEVATISAGNDPEVGEMIARAMDAVGRDGVITVEESKSLETQLEVVEGMQFDRGYISPYFVTDTERMVAEYENAYLLITSNKLSNLQDLVPVLERVAREGRPLLVIAEDVEGEALATLVVNKLRGVLNAVAVKAPAFGDRRKAMLEDIAILTGGQLISEDIGIKLENVTLDMMGVARKITVTKDKTTIVTDGSTKAAVEKRVAQIRKQLETTDSEYDREKLQERIAKLAGGVAVIKVGAATETELKDRKLRIEDALNATRAAVEEGIVPGGGATLLHLSKGIPAFKANLNAEEQVGADIVCRALQAPLYQIAHNAGLEGSVVVEKVLEKEMPFGFDALTGTYVDMFAQGIVDPAKVVRSALQNAASIAAMYLTTEAIVVEKPEPKTKTGASRSGGAGMM</sequence>